<protein>
    <recommendedName>
        <fullName evidence="1">Arginine repressor</fullName>
    </recommendedName>
</protein>
<comment type="function">
    <text evidence="1">Regulates arginine biosynthesis genes.</text>
</comment>
<comment type="pathway">
    <text>Amino-acid biosynthesis; L-arginine biosynthesis [regulation].</text>
</comment>
<comment type="subcellular location">
    <subcellularLocation>
        <location evidence="1">Cytoplasm</location>
    </subcellularLocation>
</comment>
<comment type="similarity">
    <text evidence="1">Belongs to the ArgR family.</text>
</comment>
<keyword id="KW-0028">Amino-acid biosynthesis</keyword>
<keyword id="KW-0055">Arginine biosynthesis</keyword>
<keyword id="KW-0963">Cytoplasm</keyword>
<keyword id="KW-0238">DNA-binding</keyword>
<keyword id="KW-0678">Repressor</keyword>
<keyword id="KW-0804">Transcription</keyword>
<keyword id="KW-0805">Transcription regulation</keyword>
<name>ARGR_CALS8</name>
<accession>A4XKP7</accession>
<feature type="chain" id="PRO_1000023549" description="Arginine repressor">
    <location>
        <begin position="1"/>
        <end position="152"/>
    </location>
</feature>
<sequence length="152" mass="16682">MKSERQQKILEIIQSEDIETQEELVEKLRELGYDVTQATVSRDIKELRLTKVLTETGKYKYAVLSGPEANITEKLIKVFSESIIKYDTADNLVIIKTITGAAQGAAAAIDSLNWPEVIGTIAGDDTIFIATKGNAAAEKIVERIKAILSQGD</sequence>
<evidence type="ECO:0000255" key="1">
    <source>
        <dbReference type="HAMAP-Rule" id="MF_00173"/>
    </source>
</evidence>
<organism>
    <name type="scientific">Caldicellulosiruptor saccharolyticus (strain ATCC 43494 / DSM 8903 / Tp8T 6331)</name>
    <dbReference type="NCBI Taxonomy" id="351627"/>
    <lineage>
        <taxon>Bacteria</taxon>
        <taxon>Bacillati</taxon>
        <taxon>Bacillota</taxon>
        <taxon>Bacillota incertae sedis</taxon>
        <taxon>Caldicellulosiruptorales</taxon>
        <taxon>Caldicellulosiruptoraceae</taxon>
        <taxon>Caldicellulosiruptor</taxon>
    </lineage>
</organism>
<reference key="1">
    <citation type="submission" date="2007-04" db="EMBL/GenBank/DDBJ databases">
        <title>Genome sequence of the thermophilic hydrogen-producing bacterium Caldicellulosiruptor saccharolyticus DSM 8903.</title>
        <authorList>
            <person name="Copeland A."/>
            <person name="Lucas S."/>
            <person name="Lapidus A."/>
            <person name="Barry K."/>
            <person name="Detter J.C."/>
            <person name="Glavina del Rio T."/>
            <person name="Hammon N."/>
            <person name="Israni S."/>
            <person name="Dalin E."/>
            <person name="Tice H."/>
            <person name="Pitluck S."/>
            <person name="Kiss H."/>
            <person name="Brettin T."/>
            <person name="Bruce D."/>
            <person name="Han C."/>
            <person name="Schmutz J."/>
            <person name="Larimer F."/>
            <person name="Land M."/>
            <person name="Hauser L."/>
            <person name="Kyrpides N."/>
            <person name="Lykidis A."/>
            <person name="van de Werken H.J.G."/>
            <person name="Verhaart M.R.A."/>
            <person name="VanFossen A.L."/>
            <person name="Lewis D.L."/>
            <person name="Nichols J.D."/>
            <person name="Goorissen H.P."/>
            <person name="van Niel E.W.J."/>
            <person name="Stams F.J.M."/>
            <person name="Willquist K.U."/>
            <person name="Ward D.E."/>
            <person name="van der Oost J."/>
            <person name="Kelly R.M."/>
            <person name="Kengen S.M.W."/>
            <person name="Richardson P."/>
        </authorList>
    </citation>
    <scope>NUCLEOTIDE SEQUENCE [LARGE SCALE GENOMIC DNA]</scope>
    <source>
        <strain>ATCC 43494 / DSM 8903 / Tp8T 6331</strain>
    </source>
</reference>
<gene>
    <name evidence="1" type="primary">argR</name>
    <name type="ordered locus">Csac_1897</name>
</gene>
<dbReference type="EMBL" id="CP000679">
    <property type="protein sequence ID" value="ABP67482.1"/>
    <property type="molecule type" value="Genomic_DNA"/>
</dbReference>
<dbReference type="RefSeq" id="WP_011917418.1">
    <property type="nucleotide sequence ID" value="NC_009437.1"/>
</dbReference>
<dbReference type="SMR" id="A4XKP7"/>
<dbReference type="STRING" id="351627.Csac_1897"/>
<dbReference type="KEGG" id="csc:Csac_1897"/>
<dbReference type="eggNOG" id="COG1438">
    <property type="taxonomic scope" value="Bacteria"/>
</dbReference>
<dbReference type="HOGENOM" id="CLU_097103_3_0_9"/>
<dbReference type="OrthoDB" id="9807089at2"/>
<dbReference type="UniPathway" id="UPA00068"/>
<dbReference type="Proteomes" id="UP000000256">
    <property type="component" value="Chromosome"/>
</dbReference>
<dbReference type="GO" id="GO:0005737">
    <property type="term" value="C:cytoplasm"/>
    <property type="evidence" value="ECO:0007669"/>
    <property type="project" value="UniProtKB-SubCell"/>
</dbReference>
<dbReference type="GO" id="GO:0034618">
    <property type="term" value="F:arginine binding"/>
    <property type="evidence" value="ECO:0007669"/>
    <property type="project" value="InterPro"/>
</dbReference>
<dbReference type="GO" id="GO:0003677">
    <property type="term" value="F:DNA binding"/>
    <property type="evidence" value="ECO:0007669"/>
    <property type="project" value="UniProtKB-KW"/>
</dbReference>
<dbReference type="GO" id="GO:0003700">
    <property type="term" value="F:DNA-binding transcription factor activity"/>
    <property type="evidence" value="ECO:0007669"/>
    <property type="project" value="UniProtKB-UniRule"/>
</dbReference>
<dbReference type="GO" id="GO:0006526">
    <property type="term" value="P:L-arginine biosynthetic process"/>
    <property type="evidence" value="ECO:0007669"/>
    <property type="project" value="UniProtKB-UniPathway"/>
</dbReference>
<dbReference type="GO" id="GO:0051259">
    <property type="term" value="P:protein complex oligomerization"/>
    <property type="evidence" value="ECO:0007669"/>
    <property type="project" value="InterPro"/>
</dbReference>
<dbReference type="GO" id="GO:1900079">
    <property type="term" value="P:regulation of arginine biosynthetic process"/>
    <property type="evidence" value="ECO:0007669"/>
    <property type="project" value="UniProtKB-UniRule"/>
</dbReference>
<dbReference type="Gene3D" id="3.30.1360.40">
    <property type="match status" value="1"/>
</dbReference>
<dbReference type="Gene3D" id="1.10.10.10">
    <property type="entry name" value="Winged helix-like DNA-binding domain superfamily/Winged helix DNA-binding domain"/>
    <property type="match status" value="1"/>
</dbReference>
<dbReference type="HAMAP" id="MF_00173">
    <property type="entry name" value="Arg_repressor"/>
    <property type="match status" value="1"/>
</dbReference>
<dbReference type="InterPro" id="IPR001669">
    <property type="entry name" value="Arg_repress"/>
</dbReference>
<dbReference type="InterPro" id="IPR020899">
    <property type="entry name" value="Arg_repress_C"/>
</dbReference>
<dbReference type="InterPro" id="IPR036251">
    <property type="entry name" value="Arg_repress_C_sf"/>
</dbReference>
<dbReference type="InterPro" id="IPR020900">
    <property type="entry name" value="Arg_repress_DNA-bd"/>
</dbReference>
<dbReference type="InterPro" id="IPR036388">
    <property type="entry name" value="WH-like_DNA-bd_sf"/>
</dbReference>
<dbReference type="InterPro" id="IPR036390">
    <property type="entry name" value="WH_DNA-bd_sf"/>
</dbReference>
<dbReference type="NCBIfam" id="TIGR01529">
    <property type="entry name" value="argR_whole"/>
    <property type="match status" value="1"/>
</dbReference>
<dbReference type="NCBIfam" id="NF001680">
    <property type="entry name" value="PRK00441.1"/>
    <property type="match status" value="1"/>
</dbReference>
<dbReference type="PANTHER" id="PTHR34471">
    <property type="entry name" value="ARGININE REPRESSOR"/>
    <property type="match status" value="1"/>
</dbReference>
<dbReference type="PANTHER" id="PTHR34471:SF1">
    <property type="entry name" value="ARGININE REPRESSOR"/>
    <property type="match status" value="1"/>
</dbReference>
<dbReference type="Pfam" id="PF01316">
    <property type="entry name" value="Arg_repressor"/>
    <property type="match status" value="1"/>
</dbReference>
<dbReference type="Pfam" id="PF02863">
    <property type="entry name" value="Arg_repressor_C"/>
    <property type="match status" value="1"/>
</dbReference>
<dbReference type="PRINTS" id="PR01467">
    <property type="entry name" value="ARGREPRESSOR"/>
</dbReference>
<dbReference type="SUPFAM" id="SSF55252">
    <property type="entry name" value="C-terminal domain of arginine repressor"/>
    <property type="match status" value="1"/>
</dbReference>
<dbReference type="SUPFAM" id="SSF46785">
    <property type="entry name" value="Winged helix' DNA-binding domain"/>
    <property type="match status" value="1"/>
</dbReference>
<proteinExistence type="inferred from homology"/>